<protein>
    <recommendedName>
        <fullName evidence="1">Holliday junction branch migration complex subunit RuvB</fullName>
        <ecNumber evidence="1">3.6.4.-</ecNumber>
    </recommendedName>
</protein>
<gene>
    <name evidence="1" type="primary">ruvB</name>
    <name type="ordered locus">EC55989_2039</name>
</gene>
<reference key="1">
    <citation type="journal article" date="2009" name="PLoS Genet.">
        <title>Organised genome dynamics in the Escherichia coli species results in highly diverse adaptive paths.</title>
        <authorList>
            <person name="Touchon M."/>
            <person name="Hoede C."/>
            <person name="Tenaillon O."/>
            <person name="Barbe V."/>
            <person name="Baeriswyl S."/>
            <person name="Bidet P."/>
            <person name="Bingen E."/>
            <person name="Bonacorsi S."/>
            <person name="Bouchier C."/>
            <person name="Bouvet O."/>
            <person name="Calteau A."/>
            <person name="Chiapello H."/>
            <person name="Clermont O."/>
            <person name="Cruveiller S."/>
            <person name="Danchin A."/>
            <person name="Diard M."/>
            <person name="Dossat C."/>
            <person name="Karoui M.E."/>
            <person name="Frapy E."/>
            <person name="Garry L."/>
            <person name="Ghigo J.M."/>
            <person name="Gilles A.M."/>
            <person name="Johnson J."/>
            <person name="Le Bouguenec C."/>
            <person name="Lescat M."/>
            <person name="Mangenot S."/>
            <person name="Martinez-Jehanne V."/>
            <person name="Matic I."/>
            <person name="Nassif X."/>
            <person name="Oztas S."/>
            <person name="Petit M.A."/>
            <person name="Pichon C."/>
            <person name="Rouy Z."/>
            <person name="Ruf C.S."/>
            <person name="Schneider D."/>
            <person name="Tourret J."/>
            <person name="Vacherie B."/>
            <person name="Vallenet D."/>
            <person name="Medigue C."/>
            <person name="Rocha E.P.C."/>
            <person name="Denamur E."/>
        </authorList>
    </citation>
    <scope>NUCLEOTIDE SEQUENCE [LARGE SCALE GENOMIC DNA]</scope>
    <source>
        <strain>55989 / EAEC</strain>
    </source>
</reference>
<evidence type="ECO:0000255" key="1">
    <source>
        <dbReference type="HAMAP-Rule" id="MF_00016"/>
    </source>
</evidence>
<feature type="chain" id="PRO_1000116642" description="Holliday junction branch migration complex subunit RuvB">
    <location>
        <begin position="1"/>
        <end position="336"/>
    </location>
</feature>
<feature type="region of interest" description="Large ATPase domain (RuvB-L)" evidence="1">
    <location>
        <begin position="4"/>
        <end position="184"/>
    </location>
</feature>
<feature type="region of interest" description="Small ATPAse domain (RuvB-S)" evidence="1">
    <location>
        <begin position="185"/>
        <end position="255"/>
    </location>
</feature>
<feature type="region of interest" description="Head domain (RuvB-H)" evidence="1">
    <location>
        <begin position="258"/>
        <end position="336"/>
    </location>
</feature>
<feature type="binding site" evidence="1">
    <location>
        <position position="23"/>
    </location>
    <ligand>
        <name>ATP</name>
        <dbReference type="ChEBI" id="CHEBI:30616"/>
    </ligand>
</feature>
<feature type="binding site" evidence="1">
    <location>
        <position position="24"/>
    </location>
    <ligand>
        <name>ATP</name>
        <dbReference type="ChEBI" id="CHEBI:30616"/>
    </ligand>
</feature>
<feature type="binding site" evidence="1">
    <location>
        <position position="65"/>
    </location>
    <ligand>
        <name>ATP</name>
        <dbReference type="ChEBI" id="CHEBI:30616"/>
    </ligand>
</feature>
<feature type="binding site" evidence="1">
    <location>
        <position position="68"/>
    </location>
    <ligand>
        <name>ATP</name>
        <dbReference type="ChEBI" id="CHEBI:30616"/>
    </ligand>
</feature>
<feature type="binding site" evidence="1">
    <location>
        <position position="69"/>
    </location>
    <ligand>
        <name>ATP</name>
        <dbReference type="ChEBI" id="CHEBI:30616"/>
    </ligand>
</feature>
<feature type="binding site" evidence="1">
    <location>
        <position position="69"/>
    </location>
    <ligand>
        <name>Mg(2+)</name>
        <dbReference type="ChEBI" id="CHEBI:18420"/>
    </ligand>
</feature>
<feature type="binding site" evidence="1">
    <location>
        <position position="70"/>
    </location>
    <ligand>
        <name>ATP</name>
        <dbReference type="ChEBI" id="CHEBI:30616"/>
    </ligand>
</feature>
<feature type="binding site" evidence="1">
    <location>
        <begin position="131"/>
        <end position="133"/>
    </location>
    <ligand>
        <name>ATP</name>
        <dbReference type="ChEBI" id="CHEBI:30616"/>
    </ligand>
</feature>
<feature type="binding site" evidence="1">
    <location>
        <position position="174"/>
    </location>
    <ligand>
        <name>ATP</name>
        <dbReference type="ChEBI" id="CHEBI:30616"/>
    </ligand>
</feature>
<feature type="binding site" evidence="1">
    <location>
        <position position="184"/>
    </location>
    <ligand>
        <name>ATP</name>
        <dbReference type="ChEBI" id="CHEBI:30616"/>
    </ligand>
</feature>
<feature type="binding site" evidence="1">
    <location>
        <position position="221"/>
    </location>
    <ligand>
        <name>ATP</name>
        <dbReference type="ChEBI" id="CHEBI:30616"/>
    </ligand>
</feature>
<feature type="binding site" evidence="1">
    <location>
        <position position="294"/>
    </location>
    <ligand>
        <name>DNA</name>
        <dbReference type="ChEBI" id="CHEBI:16991"/>
    </ligand>
</feature>
<feature type="binding site" evidence="1">
    <location>
        <position position="313"/>
    </location>
    <ligand>
        <name>DNA</name>
        <dbReference type="ChEBI" id="CHEBI:16991"/>
    </ligand>
</feature>
<feature type="binding site" evidence="1">
    <location>
        <position position="318"/>
    </location>
    <ligand>
        <name>DNA</name>
        <dbReference type="ChEBI" id="CHEBI:16991"/>
    </ligand>
</feature>
<organism>
    <name type="scientific">Escherichia coli (strain 55989 / EAEC)</name>
    <dbReference type="NCBI Taxonomy" id="585055"/>
    <lineage>
        <taxon>Bacteria</taxon>
        <taxon>Pseudomonadati</taxon>
        <taxon>Pseudomonadota</taxon>
        <taxon>Gammaproteobacteria</taxon>
        <taxon>Enterobacterales</taxon>
        <taxon>Enterobacteriaceae</taxon>
        <taxon>Escherichia</taxon>
    </lineage>
</organism>
<name>RUVB_ECO55</name>
<proteinExistence type="inferred from homology"/>
<keyword id="KW-0067">ATP-binding</keyword>
<keyword id="KW-0963">Cytoplasm</keyword>
<keyword id="KW-0227">DNA damage</keyword>
<keyword id="KW-0233">DNA recombination</keyword>
<keyword id="KW-0234">DNA repair</keyword>
<keyword id="KW-0238">DNA-binding</keyword>
<keyword id="KW-0378">Hydrolase</keyword>
<keyword id="KW-0547">Nucleotide-binding</keyword>
<keyword id="KW-1185">Reference proteome</keyword>
<keyword id="KW-0742">SOS response</keyword>
<accession>B7L7R3</accession>
<comment type="function">
    <text evidence="1">The RuvA-RuvB-RuvC complex processes Holliday junction (HJ) DNA during genetic recombination and DNA repair, while the RuvA-RuvB complex plays an important role in the rescue of blocked DNA replication forks via replication fork reversal (RFR). RuvA specifically binds to HJ cruciform DNA, conferring on it an open structure. The RuvB hexamer acts as an ATP-dependent pump, pulling dsDNA into and through the RuvAB complex. RuvB forms 2 homohexamers on either side of HJ DNA bound by 1 or 2 RuvA tetramers; 4 subunits per hexamer contact DNA at a time. Coordinated motions by a converter formed by DNA-disengaged RuvB subunits stimulates ATP hydrolysis and nucleotide exchange. Immobilization of the converter enables RuvB to convert the ATP-contained energy into a lever motion, pulling 2 nucleotides of DNA out of the RuvA tetramer per ATP hydrolyzed, thus driving DNA branch migration. The RuvB motors rotate together with the DNA substrate, which together with the progressing nucleotide cycle form the mechanistic basis for DNA recombination by continuous HJ branch migration. Branch migration allows RuvC to scan DNA until it finds its consensus sequence, where it cleaves and resolves cruciform DNA.</text>
</comment>
<comment type="catalytic activity">
    <reaction evidence="1">
        <text>ATP + H2O = ADP + phosphate + H(+)</text>
        <dbReference type="Rhea" id="RHEA:13065"/>
        <dbReference type="ChEBI" id="CHEBI:15377"/>
        <dbReference type="ChEBI" id="CHEBI:15378"/>
        <dbReference type="ChEBI" id="CHEBI:30616"/>
        <dbReference type="ChEBI" id="CHEBI:43474"/>
        <dbReference type="ChEBI" id="CHEBI:456216"/>
    </reaction>
</comment>
<comment type="subunit">
    <text evidence="1">Homohexamer. Forms an RuvA(8)-RuvB(12)-Holliday junction (HJ) complex. HJ DNA is sandwiched between 2 RuvA tetramers; dsDNA enters through RuvA and exits via RuvB. An RuvB hexamer assembles on each DNA strand where it exits the tetramer. Each RuvB hexamer is contacted by two RuvA subunits (via domain III) on 2 adjacent RuvB subunits; this complex drives branch migration. In the full resolvosome a probable DNA-RuvA(4)-RuvB(12)-RuvC(2) complex forms which resolves the HJ.</text>
</comment>
<comment type="subcellular location">
    <subcellularLocation>
        <location evidence="1">Cytoplasm</location>
    </subcellularLocation>
</comment>
<comment type="domain">
    <text evidence="1">Has 3 domains, the large (RuvB-L) and small ATPase (RuvB-S) domains and the C-terminal head (RuvB-H) domain. The head domain binds DNA, while the ATPase domains jointly bind ATP, ADP or are empty depending on the state of the subunit in the translocation cycle. During a single DNA translocation step the structure of each domain remains the same, but their relative positions change.</text>
</comment>
<comment type="similarity">
    <text evidence="1">Belongs to the RuvB family.</text>
</comment>
<dbReference type="EC" id="3.6.4.-" evidence="1"/>
<dbReference type="EMBL" id="CU928145">
    <property type="protein sequence ID" value="CAU97897.1"/>
    <property type="molecule type" value="Genomic_DNA"/>
</dbReference>
<dbReference type="RefSeq" id="WP_000568519.1">
    <property type="nucleotide sequence ID" value="NC_011748.1"/>
</dbReference>
<dbReference type="SMR" id="B7L7R3"/>
<dbReference type="GeneID" id="75202735"/>
<dbReference type="KEGG" id="eck:EC55989_2039"/>
<dbReference type="HOGENOM" id="CLU_055599_1_0_6"/>
<dbReference type="Proteomes" id="UP000000746">
    <property type="component" value="Chromosome"/>
</dbReference>
<dbReference type="GO" id="GO:0005737">
    <property type="term" value="C:cytoplasm"/>
    <property type="evidence" value="ECO:0007669"/>
    <property type="project" value="UniProtKB-SubCell"/>
</dbReference>
<dbReference type="GO" id="GO:0048476">
    <property type="term" value="C:Holliday junction resolvase complex"/>
    <property type="evidence" value="ECO:0007669"/>
    <property type="project" value="UniProtKB-UniRule"/>
</dbReference>
<dbReference type="GO" id="GO:0005524">
    <property type="term" value="F:ATP binding"/>
    <property type="evidence" value="ECO:0007669"/>
    <property type="project" value="UniProtKB-UniRule"/>
</dbReference>
<dbReference type="GO" id="GO:0016887">
    <property type="term" value="F:ATP hydrolysis activity"/>
    <property type="evidence" value="ECO:0007669"/>
    <property type="project" value="InterPro"/>
</dbReference>
<dbReference type="GO" id="GO:0000400">
    <property type="term" value="F:four-way junction DNA binding"/>
    <property type="evidence" value="ECO:0007669"/>
    <property type="project" value="UniProtKB-UniRule"/>
</dbReference>
<dbReference type="GO" id="GO:0009378">
    <property type="term" value="F:four-way junction helicase activity"/>
    <property type="evidence" value="ECO:0007669"/>
    <property type="project" value="InterPro"/>
</dbReference>
<dbReference type="GO" id="GO:0006310">
    <property type="term" value="P:DNA recombination"/>
    <property type="evidence" value="ECO:0007669"/>
    <property type="project" value="UniProtKB-UniRule"/>
</dbReference>
<dbReference type="GO" id="GO:0006281">
    <property type="term" value="P:DNA repair"/>
    <property type="evidence" value="ECO:0007669"/>
    <property type="project" value="UniProtKB-UniRule"/>
</dbReference>
<dbReference type="GO" id="GO:0009432">
    <property type="term" value="P:SOS response"/>
    <property type="evidence" value="ECO:0007669"/>
    <property type="project" value="UniProtKB-UniRule"/>
</dbReference>
<dbReference type="CDD" id="cd00009">
    <property type="entry name" value="AAA"/>
    <property type="match status" value="1"/>
</dbReference>
<dbReference type="FunFam" id="1.10.10.10:FF:000086">
    <property type="entry name" value="Holliday junction ATP-dependent DNA helicase RuvB"/>
    <property type="match status" value="1"/>
</dbReference>
<dbReference type="FunFam" id="1.10.8.60:FF:000023">
    <property type="entry name" value="Holliday junction ATP-dependent DNA helicase RuvB"/>
    <property type="match status" value="1"/>
</dbReference>
<dbReference type="FunFam" id="3.40.50.300:FF:000073">
    <property type="entry name" value="Holliday junction ATP-dependent DNA helicase RuvB"/>
    <property type="match status" value="1"/>
</dbReference>
<dbReference type="Gene3D" id="1.10.8.60">
    <property type="match status" value="1"/>
</dbReference>
<dbReference type="Gene3D" id="3.40.50.300">
    <property type="entry name" value="P-loop containing nucleotide triphosphate hydrolases"/>
    <property type="match status" value="1"/>
</dbReference>
<dbReference type="Gene3D" id="1.10.10.10">
    <property type="entry name" value="Winged helix-like DNA-binding domain superfamily/Winged helix DNA-binding domain"/>
    <property type="match status" value="1"/>
</dbReference>
<dbReference type="HAMAP" id="MF_00016">
    <property type="entry name" value="DNA_HJ_migration_RuvB"/>
    <property type="match status" value="1"/>
</dbReference>
<dbReference type="InterPro" id="IPR003593">
    <property type="entry name" value="AAA+_ATPase"/>
</dbReference>
<dbReference type="InterPro" id="IPR041445">
    <property type="entry name" value="AAA_lid_4"/>
</dbReference>
<dbReference type="InterPro" id="IPR004605">
    <property type="entry name" value="DNA_helicase_Holl-junc_RuvB"/>
</dbReference>
<dbReference type="InterPro" id="IPR027417">
    <property type="entry name" value="P-loop_NTPase"/>
</dbReference>
<dbReference type="InterPro" id="IPR008824">
    <property type="entry name" value="RuvB-like_N"/>
</dbReference>
<dbReference type="InterPro" id="IPR008823">
    <property type="entry name" value="RuvB_C"/>
</dbReference>
<dbReference type="InterPro" id="IPR036388">
    <property type="entry name" value="WH-like_DNA-bd_sf"/>
</dbReference>
<dbReference type="InterPro" id="IPR036390">
    <property type="entry name" value="WH_DNA-bd_sf"/>
</dbReference>
<dbReference type="NCBIfam" id="NF000868">
    <property type="entry name" value="PRK00080.1"/>
    <property type="match status" value="1"/>
</dbReference>
<dbReference type="NCBIfam" id="TIGR00635">
    <property type="entry name" value="ruvB"/>
    <property type="match status" value="1"/>
</dbReference>
<dbReference type="PANTHER" id="PTHR42848">
    <property type="match status" value="1"/>
</dbReference>
<dbReference type="PANTHER" id="PTHR42848:SF1">
    <property type="entry name" value="HOLLIDAY JUNCTION BRANCH MIGRATION COMPLEX SUBUNIT RUVB"/>
    <property type="match status" value="1"/>
</dbReference>
<dbReference type="Pfam" id="PF17864">
    <property type="entry name" value="AAA_lid_4"/>
    <property type="match status" value="1"/>
</dbReference>
<dbReference type="Pfam" id="PF05491">
    <property type="entry name" value="RuvB_C"/>
    <property type="match status" value="1"/>
</dbReference>
<dbReference type="Pfam" id="PF05496">
    <property type="entry name" value="RuvB_N"/>
    <property type="match status" value="1"/>
</dbReference>
<dbReference type="SMART" id="SM00382">
    <property type="entry name" value="AAA"/>
    <property type="match status" value="1"/>
</dbReference>
<dbReference type="SUPFAM" id="SSF52540">
    <property type="entry name" value="P-loop containing nucleoside triphosphate hydrolases"/>
    <property type="match status" value="1"/>
</dbReference>
<dbReference type="SUPFAM" id="SSF46785">
    <property type="entry name" value="Winged helix' DNA-binding domain"/>
    <property type="match status" value="1"/>
</dbReference>
<sequence>MIEADRLISAGTTLPEDVADRAIRPKLLEEYVGQPQVRSQMEIFIKAAKLRGDALDHLLIFGPPGLGKTTLANIVANEMGVNLRTTSGPVLEKAGDLAAMLTNLEPHDVLFIDEIHRLSPVVEEVLYPAMEDYQLDIMIGEGPAARSIKIDLPPFTLIGATTRAGSLTSPLRDRFGIVQRLEFYQVPDLQYIVSRSARFMGLEMSDDGALEVARRARGTPRIANRLLRRVRDFAEVKHDGTISADIAAQALDMLNVDAEGFDYMDRKLLLAVIDKFFGGPVGLDNLAAAIGEERETIEDVLEPYLIQQGFLQRTPRGRMATTRAWNHFGITPPEMP</sequence>